<reference key="1">
    <citation type="journal article" date="1990" name="Virology">
        <title>The complete DNA sequence of vaccinia virus.</title>
        <authorList>
            <person name="Goebel S.J."/>
            <person name="Johnson G.P."/>
            <person name="Perkus M.E."/>
            <person name="Davis S.W."/>
            <person name="Winslow J.P."/>
            <person name="Paoletti E."/>
        </authorList>
    </citation>
    <scope>NUCLEOTIDE SEQUENCE [LARGE SCALE GENOMIC DNA]</scope>
</reference>
<reference key="2">
    <citation type="journal article" date="1990" name="Virology">
        <title>Appendix to 'The complete DNA sequence of vaccinia virus'.</title>
        <authorList>
            <person name="Goebel S.J."/>
            <person name="Johnson G.P."/>
            <person name="Perkus M.E."/>
            <person name="Davis S.W."/>
            <person name="Winslow J.P."/>
            <person name="Paoletti E."/>
        </authorList>
    </citation>
    <scope>NUCLEOTIDE SEQUENCE [LARGE SCALE GENOMIC DNA]</scope>
</reference>
<reference key="3">
    <citation type="journal article" date="1992" name="J. Gen. Virol.">
        <title>Vaccinia virus encodes four putative DNA and/or RNA helicases distantly related to each other.</title>
        <authorList>
            <person name="Koonin E.V."/>
            <person name="Senkevich T.G."/>
        </authorList>
    </citation>
    <scope>SIMILARITY TO HELICASES</scope>
</reference>
<name>NPH2_VACCC</name>
<proteinExistence type="evidence at transcript level"/>
<sequence>MEKNLPDIFFFPNCVNVFSYKYSQDEFSNMSKTERDSFSLAVFPVIKHRWHNAHVVKHKGIYKVSTEARGKKVSPPSLGKPAHINLTTKQYIYSEHTISFECYSFLKCITNTEINSFDEYILRGLLEAGNSLQIFSNSVGKRTDTIGVLGNKYPFSKIPLASLTPKAQREIFSAWISHRPVVLTGGTGVGKTSQVPKLLLWFNYLFGGFSTLDKITDFHERPVILSLPRIALVRLHSNTILKSLGFKVLDGSPISLRYGSIPEELINKQPKKYGIVFSTHKLSLTKLFSYGTLIIDEVHEHDQIGDIIIAVARKHHTKIDSMFLMTATLEDDRERLKVFLPNPAFIHIPGDTLFKISEVFIHNKINPSSRMAYIEEEKRNLVTAIQMYTPPDGSSGIVFVASVAQCHEYKSYLEKRLPYDMYIIHGKVLDIDEILEKVYSSPNVSIIISTPYLESSVTIRNVTHIYDMGRVFVPAPFGGSQEFISKSMRDQRKGRVGRVNPGTYVYFYDLSYMKSIQRIDSEFLHNYILYANKFNLTLPEDLFIIPTNLDILWRTKEYIDSFDISTETWNKLLSNYYMKMIEYAKLYVLSPILAEELDNFERTGELTSIVREAILSLNLRIKILNFKHKDDDTYIHFCKILFGVYNGTNATIYYHRPLTGYMNMISDTIFVPVDNN</sequence>
<organism>
    <name type="scientific">Vaccinia virus (strain Copenhagen)</name>
    <name type="common">VACV</name>
    <dbReference type="NCBI Taxonomy" id="10249"/>
    <lineage>
        <taxon>Viruses</taxon>
        <taxon>Varidnaviria</taxon>
        <taxon>Bamfordvirae</taxon>
        <taxon>Nucleocytoviricota</taxon>
        <taxon>Pokkesviricetes</taxon>
        <taxon>Chitovirales</taxon>
        <taxon>Poxviridae</taxon>
        <taxon>Chordopoxvirinae</taxon>
        <taxon>Orthopoxvirus</taxon>
        <taxon>Vaccinia virus</taxon>
    </lineage>
</organism>
<keyword id="KW-0067">ATP-binding</keyword>
<keyword id="KW-0244">Early protein</keyword>
<keyword id="KW-0347">Helicase</keyword>
<keyword id="KW-0378">Hydrolase</keyword>
<keyword id="KW-0426">Late protein</keyword>
<keyword id="KW-0547">Nucleotide-binding</keyword>
<keyword id="KW-1185">Reference proteome</keyword>
<keyword id="KW-0804">Transcription</keyword>
<keyword id="KW-0946">Virion</keyword>
<gene>
    <name type="primary">OPG084</name>
    <name type="synonym">NPH2</name>
    <name type="ORF">I8R</name>
</gene>
<evidence type="ECO:0000250" key="1">
    <source>
        <dbReference type="UniProtKB" id="P12927"/>
    </source>
</evidence>
<evidence type="ECO:0000255" key="2">
    <source>
        <dbReference type="PROSITE-ProRule" id="PRU00541"/>
    </source>
</evidence>
<evidence type="ECO:0000255" key="3">
    <source>
        <dbReference type="PROSITE-ProRule" id="PRU00542"/>
    </source>
</evidence>
<evidence type="ECO:0000305" key="4"/>
<dbReference type="EC" id="3.6.4.13"/>
<dbReference type="EMBL" id="M35027">
    <property type="protein sequence ID" value="AAA48064.1"/>
    <property type="molecule type" value="Genomic_DNA"/>
</dbReference>
<dbReference type="PIR" id="D42511">
    <property type="entry name" value="D42511"/>
</dbReference>
<dbReference type="SMR" id="P20502"/>
<dbReference type="Proteomes" id="UP000008269">
    <property type="component" value="Segment"/>
</dbReference>
<dbReference type="GO" id="GO:0044423">
    <property type="term" value="C:virion component"/>
    <property type="evidence" value="ECO:0007669"/>
    <property type="project" value="UniProtKB-KW"/>
</dbReference>
<dbReference type="GO" id="GO:0005524">
    <property type="term" value="F:ATP binding"/>
    <property type="evidence" value="ECO:0007669"/>
    <property type="project" value="UniProtKB-KW"/>
</dbReference>
<dbReference type="GO" id="GO:0016887">
    <property type="term" value="F:ATP hydrolysis activity"/>
    <property type="evidence" value="ECO:0007669"/>
    <property type="project" value="RHEA"/>
</dbReference>
<dbReference type="GO" id="GO:0003723">
    <property type="term" value="F:RNA binding"/>
    <property type="evidence" value="ECO:0007669"/>
    <property type="project" value="TreeGrafter"/>
</dbReference>
<dbReference type="GO" id="GO:0003724">
    <property type="term" value="F:RNA helicase activity"/>
    <property type="evidence" value="ECO:0007669"/>
    <property type="project" value="UniProtKB-EC"/>
</dbReference>
<dbReference type="Gene3D" id="3.40.50.300">
    <property type="entry name" value="P-loop containing nucleotide triphosphate hydrolases"/>
    <property type="match status" value="2"/>
</dbReference>
<dbReference type="InterPro" id="IPR011545">
    <property type="entry name" value="DEAD/DEAH_box_helicase_dom"/>
</dbReference>
<dbReference type="InterPro" id="IPR002464">
    <property type="entry name" value="DNA/RNA_helicase_DEAH_CS"/>
</dbReference>
<dbReference type="InterPro" id="IPR014001">
    <property type="entry name" value="Helicase_ATP-bd"/>
</dbReference>
<dbReference type="InterPro" id="IPR001650">
    <property type="entry name" value="Helicase_C-like"/>
</dbReference>
<dbReference type="InterPro" id="IPR021892">
    <property type="entry name" value="NPH-II"/>
</dbReference>
<dbReference type="InterPro" id="IPR027417">
    <property type="entry name" value="P-loop_NTPase"/>
</dbReference>
<dbReference type="PANTHER" id="PTHR18934">
    <property type="entry name" value="ATP-DEPENDENT RNA HELICASE"/>
    <property type="match status" value="1"/>
</dbReference>
<dbReference type="PANTHER" id="PTHR18934:SF99">
    <property type="entry name" value="ATP-DEPENDENT RNA HELICASE DHX37-RELATED"/>
    <property type="match status" value="1"/>
</dbReference>
<dbReference type="Pfam" id="PF00270">
    <property type="entry name" value="DEAD"/>
    <property type="match status" value="1"/>
</dbReference>
<dbReference type="Pfam" id="PF00271">
    <property type="entry name" value="Helicase_C"/>
    <property type="match status" value="1"/>
</dbReference>
<dbReference type="Pfam" id="PF12011">
    <property type="entry name" value="NPH-II"/>
    <property type="match status" value="1"/>
</dbReference>
<dbReference type="SMART" id="SM00487">
    <property type="entry name" value="DEXDc"/>
    <property type="match status" value="1"/>
</dbReference>
<dbReference type="SMART" id="SM00490">
    <property type="entry name" value="HELICc"/>
    <property type="match status" value="1"/>
</dbReference>
<dbReference type="SUPFAM" id="SSF52540">
    <property type="entry name" value="P-loop containing nucleoside triphosphate hydrolases"/>
    <property type="match status" value="1"/>
</dbReference>
<dbReference type="PROSITE" id="PS00690">
    <property type="entry name" value="DEAH_ATP_HELICASE"/>
    <property type="match status" value="1"/>
</dbReference>
<dbReference type="PROSITE" id="PS51192">
    <property type="entry name" value="HELICASE_ATP_BIND_1"/>
    <property type="match status" value="1"/>
</dbReference>
<dbReference type="PROSITE" id="PS51194">
    <property type="entry name" value="HELICASE_CTER"/>
    <property type="match status" value="1"/>
</dbReference>
<organismHost>
    <name type="scientific">Homo sapiens</name>
    <name type="common">Human</name>
    <dbReference type="NCBI Taxonomy" id="9606"/>
</organismHost>
<protein>
    <recommendedName>
        <fullName>RNA helicase NPH-II</fullName>
        <ecNumber>3.6.4.13</ecNumber>
    </recommendedName>
    <alternativeName>
        <fullName>Nucleoside triphosphatase II</fullName>
        <shortName>NTPase II</shortName>
    </alternativeName>
    <alternativeName>
        <fullName>Nucleoside triphosphate phosphohydrolase II</fullName>
        <shortName>NPH II</shortName>
    </alternativeName>
    <alternativeName>
        <fullName>RNA helicase I8</fullName>
    </alternativeName>
</protein>
<comment type="function">
    <text evidence="1">NTP-dependent helicase that catalyzes unidirectional unwinding of 3'tailed duplex RNAs and plays an important role during transcription of early mRNAs, presumably by preventing R-loop formation behind the elongating RNA polymerase. Might also play a role in the export of newly synthesized mRNA chains out of the core into the cytoplasm. Required for replication and propagation of viral particles.</text>
</comment>
<comment type="catalytic activity">
    <reaction evidence="1">
        <text>ATP + H2O = ADP + phosphate + H(+)</text>
        <dbReference type="Rhea" id="RHEA:13065"/>
        <dbReference type="ChEBI" id="CHEBI:15377"/>
        <dbReference type="ChEBI" id="CHEBI:15378"/>
        <dbReference type="ChEBI" id="CHEBI:30616"/>
        <dbReference type="ChEBI" id="CHEBI:43474"/>
        <dbReference type="ChEBI" id="CHEBI:456216"/>
        <dbReference type="EC" id="3.6.4.13"/>
    </reaction>
</comment>
<comment type="subunit">
    <text evidence="1">Monomer.</text>
</comment>
<comment type="subcellular location">
    <subcellularLocation>
        <location evidence="1">Virion</location>
    </subcellularLocation>
    <text evidence="1">Localizes to the virion core.</text>
</comment>
<comment type="induction">
    <text>Expressed both early and late in the viral replicative cycle.</text>
</comment>
<comment type="similarity">
    <text evidence="4">Belongs to the DEAD box helicase family. DEAH subfamily.</text>
</comment>
<accession>P20502</accession>
<feature type="chain" id="PRO_0000055183" description="RNA helicase NPH-II">
    <location>
        <begin position="1"/>
        <end position="676"/>
    </location>
</feature>
<feature type="domain" description="Helicase ATP-binding" evidence="2">
    <location>
        <begin position="172"/>
        <end position="347"/>
    </location>
</feature>
<feature type="domain" description="Helicase C-terminal" evidence="3">
    <location>
        <begin position="366"/>
        <end position="535"/>
    </location>
</feature>
<feature type="short sequence motif" description="DEXH box">
    <location>
        <begin position="296"/>
        <end position="299"/>
    </location>
</feature>
<feature type="binding site" evidence="2">
    <location>
        <begin position="185"/>
        <end position="192"/>
    </location>
    <ligand>
        <name>ATP</name>
        <dbReference type="ChEBI" id="CHEBI:30616"/>
    </ligand>
</feature>